<sequence length="295" mass="33669">MKQDAGLGFRLWVESVVSRVLPGADVSEVLLPDTATKIYVFCVDGRVLFNLSDLVDILKCFGVCADSSQICEYMRSTGRVERLEQLKDLFGEEGLEVVCSSVFSDKLLQEIGSSIRSAKGPECFKDAGPELSHPRFSIGEYKFGCQREGRDGFHNVNELYPFNHQWTDSIMDGILKNIYTSDGKRMEDGCTGKERPAFIKAGSRGRHMKHSGSLKDRPFVCTYNDCKRAFKRYEHLKRHNLMHTGERPHKCRFPGCSKAFSRSDNLSQHYKVHSTTNEMHTRSYGSYRYLNKEFN</sequence>
<keyword id="KW-0479">Metal-binding</keyword>
<keyword id="KW-1185">Reference proteome</keyword>
<keyword id="KW-0677">Repeat</keyword>
<keyword id="KW-0862">Zinc</keyword>
<keyword id="KW-0863">Zinc-finger</keyword>
<protein>
    <recommendedName>
        <fullName>Zinc finger C2H2 protein ECU08_0560</fullName>
    </recommendedName>
</protein>
<accession>Q8SUR9</accession>
<gene>
    <name type="ordered locus">ECU08_0560</name>
</gene>
<dbReference type="EMBL" id="AL590448">
    <property type="protein sequence ID" value="CAD26361.2"/>
    <property type="molecule type" value="Genomic_DNA"/>
</dbReference>
<dbReference type="RefSeq" id="NP_597185.2">
    <property type="nucleotide sequence ID" value="NM_001041794.2"/>
</dbReference>
<dbReference type="STRING" id="284813.Q8SUR9"/>
<dbReference type="GeneID" id="859607"/>
<dbReference type="KEGG" id="ecu:ECU08_0560"/>
<dbReference type="VEuPathDB" id="MicrosporidiaDB:ECU08_0560"/>
<dbReference type="HOGENOM" id="CLU_084834_0_0_1"/>
<dbReference type="InParanoid" id="Q8SUR9"/>
<dbReference type="OrthoDB" id="654211at2759"/>
<dbReference type="Proteomes" id="UP000000819">
    <property type="component" value="Chromosome VIII"/>
</dbReference>
<dbReference type="GO" id="GO:0000785">
    <property type="term" value="C:chromatin"/>
    <property type="evidence" value="ECO:0007669"/>
    <property type="project" value="TreeGrafter"/>
</dbReference>
<dbReference type="GO" id="GO:0031519">
    <property type="term" value="C:PcG protein complex"/>
    <property type="evidence" value="ECO:0007669"/>
    <property type="project" value="TreeGrafter"/>
</dbReference>
<dbReference type="GO" id="GO:0005667">
    <property type="term" value="C:transcription regulator complex"/>
    <property type="evidence" value="ECO:0007669"/>
    <property type="project" value="TreeGrafter"/>
</dbReference>
<dbReference type="GO" id="GO:0000981">
    <property type="term" value="F:DNA-binding transcription factor activity, RNA polymerase II-specific"/>
    <property type="evidence" value="ECO:0007669"/>
    <property type="project" value="TreeGrafter"/>
</dbReference>
<dbReference type="GO" id="GO:0000978">
    <property type="term" value="F:RNA polymerase II cis-regulatory region sequence-specific DNA binding"/>
    <property type="evidence" value="ECO:0007669"/>
    <property type="project" value="TreeGrafter"/>
</dbReference>
<dbReference type="GO" id="GO:0008270">
    <property type="term" value="F:zinc ion binding"/>
    <property type="evidence" value="ECO:0007669"/>
    <property type="project" value="UniProtKB-KW"/>
</dbReference>
<dbReference type="FunFam" id="3.30.160.60:FF:000125">
    <property type="entry name" value="Putative zinc finger protein 143"/>
    <property type="match status" value="2"/>
</dbReference>
<dbReference type="Gene3D" id="3.30.160.60">
    <property type="entry name" value="Classic Zinc Finger"/>
    <property type="match status" value="2"/>
</dbReference>
<dbReference type="InterPro" id="IPR036236">
    <property type="entry name" value="Znf_C2H2_sf"/>
</dbReference>
<dbReference type="InterPro" id="IPR013087">
    <property type="entry name" value="Znf_C2H2_type"/>
</dbReference>
<dbReference type="PANTHER" id="PTHR14003">
    <property type="entry name" value="TRANSCRIPTIONAL REPRESSOR PROTEIN YY"/>
    <property type="match status" value="1"/>
</dbReference>
<dbReference type="PANTHER" id="PTHR14003:SF19">
    <property type="entry name" value="YY2 TRANSCRIPTION FACTOR"/>
    <property type="match status" value="1"/>
</dbReference>
<dbReference type="Pfam" id="PF00096">
    <property type="entry name" value="zf-C2H2"/>
    <property type="match status" value="2"/>
</dbReference>
<dbReference type="SMART" id="SM00355">
    <property type="entry name" value="ZnF_C2H2"/>
    <property type="match status" value="2"/>
</dbReference>
<dbReference type="SUPFAM" id="SSF57667">
    <property type="entry name" value="beta-beta-alpha zinc fingers"/>
    <property type="match status" value="2"/>
</dbReference>
<dbReference type="PROSITE" id="PS00028">
    <property type="entry name" value="ZINC_FINGER_C2H2_1"/>
    <property type="match status" value="2"/>
</dbReference>
<dbReference type="PROSITE" id="PS50157">
    <property type="entry name" value="ZINC_FINGER_C2H2_2"/>
    <property type="match status" value="2"/>
</dbReference>
<name>Z856_ENCCU</name>
<proteinExistence type="predicted"/>
<feature type="chain" id="PRO_0000047830" description="Zinc finger C2H2 protein ECU08_0560">
    <location>
        <begin position="1"/>
        <end position="295"/>
    </location>
</feature>
<feature type="zinc finger region" description="C2H2-type 1" evidence="1">
    <location>
        <begin position="219"/>
        <end position="243"/>
    </location>
</feature>
<feature type="zinc finger region" description="C2H2-type 2" evidence="1">
    <location>
        <begin position="249"/>
        <end position="273"/>
    </location>
</feature>
<organism>
    <name type="scientific">Encephalitozoon cuniculi (strain GB-M1)</name>
    <name type="common">Microsporidian parasite</name>
    <dbReference type="NCBI Taxonomy" id="284813"/>
    <lineage>
        <taxon>Eukaryota</taxon>
        <taxon>Fungi</taxon>
        <taxon>Fungi incertae sedis</taxon>
        <taxon>Microsporidia</taxon>
        <taxon>Unikaryonidae</taxon>
        <taxon>Encephalitozoon</taxon>
    </lineage>
</organism>
<evidence type="ECO:0000255" key="1">
    <source>
        <dbReference type="PROSITE-ProRule" id="PRU00042"/>
    </source>
</evidence>
<reference key="1">
    <citation type="journal article" date="2001" name="Nature">
        <title>Genome sequence and gene compaction of the eukaryote parasite Encephalitozoon cuniculi.</title>
        <authorList>
            <person name="Katinka M.D."/>
            <person name="Duprat S."/>
            <person name="Cornillot E."/>
            <person name="Metenier G."/>
            <person name="Thomarat F."/>
            <person name="Prensier G."/>
            <person name="Barbe V."/>
            <person name="Peyretaillade E."/>
            <person name="Brottier P."/>
            <person name="Wincker P."/>
            <person name="Delbac F."/>
            <person name="El Alaoui H."/>
            <person name="Peyret P."/>
            <person name="Saurin W."/>
            <person name="Gouy M."/>
            <person name="Weissenbach J."/>
            <person name="Vivares C.P."/>
        </authorList>
    </citation>
    <scope>NUCLEOTIDE SEQUENCE [LARGE SCALE GENOMIC DNA]</scope>
    <source>
        <strain>GB-M1</strain>
    </source>
</reference>
<reference key="2">
    <citation type="journal article" date="2009" name="BMC Genomics">
        <title>Identification of transcriptional signals in Encephalitozoon cuniculi widespread among Microsporidia phylum: support for accurate structural genome annotation.</title>
        <authorList>
            <person name="Peyretaillade E."/>
            <person name="Goncalves O."/>
            <person name="Terrat S."/>
            <person name="Dugat-Bony E."/>
            <person name="Wincker P."/>
            <person name="Cornman R.S."/>
            <person name="Evans J.D."/>
            <person name="Delbac F."/>
            <person name="Peyret P."/>
        </authorList>
    </citation>
    <scope>GENOME REANNOTATION</scope>
    <source>
        <strain>GB-M1</strain>
    </source>
</reference>